<name>APOA4_MIRAN</name>
<accession>P0DTS0</accession>
<dbReference type="EMBL" id="PITE01000000">
    <property type="status" value="NOT_ANNOTATED_CDS"/>
    <property type="molecule type" value="Genomic_DNA"/>
</dbReference>
<dbReference type="RefSeq" id="XP_045748847.2">
    <property type="nucleotide sequence ID" value="XM_045892891.2"/>
</dbReference>
<dbReference type="SMR" id="P0DTS0"/>
<dbReference type="GeneID" id="123856774"/>
<dbReference type="GO" id="GO:0042627">
    <property type="term" value="C:chylomicron"/>
    <property type="evidence" value="ECO:0007669"/>
    <property type="project" value="UniProtKB-KW"/>
</dbReference>
<dbReference type="GO" id="GO:1903561">
    <property type="term" value="C:extracellular vesicle"/>
    <property type="evidence" value="ECO:0007669"/>
    <property type="project" value="TreeGrafter"/>
</dbReference>
<dbReference type="GO" id="GO:0034364">
    <property type="term" value="C:high-density lipoprotein particle"/>
    <property type="evidence" value="ECO:0007669"/>
    <property type="project" value="UniProtKB-KW"/>
</dbReference>
<dbReference type="GO" id="GO:0034362">
    <property type="term" value="C:low-density lipoprotein particle"/>
    <property type="evidence" value="ECO:0007669"/>
    <property type="project" value="TreeGrafter"/>
</dbReference>
<dbReference type="GO" id="GO:0034361">
    <property type="term" value="C:very-low-density lipoprotein particle"/>
    <property type="evidence" value="ECO:0007669"/>
    <property type="project" value="TreeGrafter"/>
</dbReference>
<dbReference type="GO" id="GO:0120020">
    <property type="term" value="F:cholesterol transfer activity"/>
    <property type="evidence" value="ECO:0007669"/>
    <property type="project" value="TreeGrafter"/>
</dbReference>
<dbReference type="GO" id="GO:0060228">
    <property type="term" value="F:phosphatidylcholine-sterol O-acyltransferase activator activity"/>
    <property type="evidence" value="ECO:0007669"/>
    <property type="project" value="TreeGrafter"/>
</dbReference>
<dbReference type="GO" id="GO:0005543">
    <property type="term" value="F:phospholipid binding"/>
    <property type="evidence" value="ECO:0007669"/>
    <property type="project" value="TreeGrafter"/>
</dbReference>
<dbReference type="GO" id="GO:0055090">
    <property type="term" value="P:acylglycerol homeostasis"/>
    <property type="evidence" value="ECO:0007669"/>
    <property type="project" value="TreeGrafter"/>
</dbReference>
<dbReference type="GO" id="GO:0033344">
    <property type="term" value="P:cholesterol efflux"/>
    <property type="evidence" value="ECO:0007669"/>
    <property type="project" value="TreeGrafter"/>
</dbReference>
<dbReference type="GO" id="GO:0008203">
    <property type="term" value="P:cholesterol metabolic process"/>
    <property type="evidence" value="ECO:0007669"/>
    <property type="project" value="TreeGrafter"/>
</dbReference>
<dbReference type="GO" id="GO:0042157">
    <property type="term" value="P:lipoprotein metabolic process"/>
    <property type="evidence" value="ECO:0007669"/>
    <property type="project" value="InterPro"/>
</dbReference>
<dbReference type="GO" id="GO:0033700">
    <property type="term" value="P:phospholipid efflux"/>
    <property type="evidence" value="ECO:0007669"/>
    <property type="project" value="TreeGrafter"/>
</dbReference>
<dbReference type="FunFam" id="1.20.120.20:FF:000004">
    <property type="entry name" value="Apolipoprotein A-IV"/>
    <property type="match status" value="1"/>
</dbReference>
<dbReference type="FunFam" id="1.20.120.20:FF:000005">
    <property type="entry name" value="Apolipoprotein A-IV"/>
    <property type="match status" value="1"/>
</dbReference>
<dbReference type="Gene3D" id="1.20.120.20">
    <property type="entry name" value="Apolipoprotein"/>
    <property type="match status" value="2"/>
</dbReference>
<dbReference type="InterPro" id="IPR000074">
    <property type="entry name" value="ApoA_E"/>
</dbReference>
<dbReference type="InterPro" id="IPR050163">
    <property type="entry name" value="Apolipoprotein_A1/A4/E"/>
</dbReference>
<dbReference type="PANTHER" id="PTHR18976">
    <property type="entry name" value="APOLIPOPROTEIN"/>
    <property type="match status" value="1"/>
</dbReference>
<dbReference type="PANTHER" id="PTHR18976:SF1">
    <property type="entry name" value="APOLIPOPROTEIN A-IV"/>
    <property type="match status" value="1"/>
</dbReference>
<dbReference type="Pfam" id="PF01442">
    <property type="entry name" value="Apolipoprotein"/>
    <property type="match status" value="1"/>
</dbReference>
<dbReference type="SUPFAM" id="SSF58113">
    <property type="entry name" value="Apolipoprotein A-I"/>
    <property type="match status" value="2"/>
</dbReference>
<sequence length="382" mass="43620">MFLKAVVLTLSLVAVTGAQAEVSANQVATVVWDYFSQLSNNAKEAVEHLQKSELTQQLNALFQDKIGQVNTYTDNLQKKLVSFAMELHERLRKDSEKLKEEIRKELEELRAGLLPHADEVSRKIGDNMHELQQRLGPYAEELRTQVNTHAEHLRNQLTAHAQRMETTLRQNVGNLQASLTPYADELKAKIDQNVEELKGHLTPYADELKVKIDQNVEDLRRSLAPYAQDVQEKLNHQLEGLAFQMKKNAEELKAKISANADELRQKLVPVAEVVRGKLRDNTEELQKSLAELSSHLDRQVEEFRRNMGPYGETFNKALLQQVEELRQKLGPYAGDVEDHLSFLEKDLRDKVNSFFSTLEEKENQDMLVAVPELQLTPVPLES</sequence>
<organism>
    <name type="scientific">Mirounga angustirostris</name>
    <name type="common">Northern elephant seal</name>
    <name type="synonym">Macrorhinus angustirostris</name>
    <dbReference type="NCBI Taxonomy" id="9716"/>
    <lineage>
        <taxon>Eukaryota</taxon>
        <taxon>Metazoa</taxon>
        <taxon>Chordata</taxon>
        <taxon>Craniata</taxon>
        <taxon>Vertebrata</taxon>
        <taxon>Euteleostomi</taxon>
        <taxon>Mammalia</taxon>
        <taxon>Eutheria</taxon>
        <taxon>Laurasiatheria</taxon>
        <taxon>Carnivora</taxon>
        <taxon>Caniformia</taxon>
        <taxon>Pinnipedia</taxon>
        <taxon>Phocidae</taxon>
        <taxon>Monachinae</taxon>
        <taxon>Miroungini</taxon>
        <taxon>Mirounga</taxon>
    </lineage>
</organism>
<comment type="function">
    <text evidence="3">May have a role in chylomicrons and VLDL secretion and catabolism. Required for efficient activation of lipoprotein lipase by ApoC-II; potent activator of LCAT. Apoa-IV is a major component of HDL and chylomicrons.</text>
</comment>
<comment type="subunit">
    <text evidence="2">Homodimer.</text>
</comment>
<comment type="subcellular location">
    <subcellularLocation>
        <location evidence="3">Secreted</location>
    </subcellularLocation>
</comment>
<comment type="domain">
    <text evidence="3">Nine of the thirteen 22-amino acid tandem repeats (each 22-mer is actually a tandem array of two, A and B, related 11-mers) occurring in this sequence are predicted to be highly alpha-helical, and many of these helices are amphipathic. They may therefore serve as lipid-binding domains with lecithin:cholesterol acyltransferase (LCAT) activating abilities.</text>
</comment>
<comment type="PTM">
    <text evidence="1">Phosphorylation sites are present in the extracellular medium.</text>
</comment>
<comment type="similarity">
    <text evidence="5">Belongs to the apolipoprotein A1/A4/E family.</text>
</comment>
<reference key="1">
    <citation type="submission" date="2017-11" db="EMBL/GenBank/DDBJ databases">
        <title>The 200 mammals project: sequencing genomes by a novel cost-effective method, yielding a high resolution annotation of the human genome.</title>
        <authorList>
            <person name="Johnson J."/>
            <person name="Muren E."/>
            <person name="Swofford R."/>
            <person name="Turner-Maier J."/>
            <person name="Marinescu V.D."/>
            <person name="Genereux D.P."/>
            <person name="Alfoldi J."/>
            <person name="Birren B."/>
            <person name="Karlsson E.K."/>
            <person name="Lindblad-Toh K."/>
        </authorList>
    </citation>
    <scope>NUCLEOTIDE SEQUENCE [LARGE SCALE GENOMIC DNA]</scope>
</reference>
<reference key="2">
    <citation type="unpublished observations" date="2019-10">
        <authorList>
            <person name="Puppione D.L."/>
        </authorList>
    </citation>
    <scope>IDENTIFICATION</scope>
</reference>
<evidence type="ECO:0000250" key="1"/>
<evidence type="ECO:0000250" key="2">
    <source>
        <dbReference type="UniProtKB" id="P06727"/>
    </source>
</evidence>
<evidence type="ECO:0000250" key="3">
    <source>
        <dbReference type="UniProtKB" id="P33621"/>
    </source>
</evidence>
<evidence type="ECO:0000255" key="4"/>
<evidence type="ECO:0000305" key="5"/>
<feature type="signal peptide" evidence="4">
    <location>
        <begin position="1"/>
        <end position="20"/>
    </location>
</feature>
<feature type="chain" id="PRO_0000448767" description="Apolipoprotein A-IV">
    <location>
        <begin position="21"/>
        <end position="382"/>
    </location>
</feature>
<feature type="repeat" description="1">
    <location>
        <begin position="33"/>
        <end position="54"/>
    </location>
</feature>
<feature type="repeat" description="2">
    <location>
        <begin position="60"/>
        <end position="81"/>
    </location>
</feature>
<feature type="repeat" description="3">
    <location>
        <begin position="82"/>
        <end position="103"/>
    </location>
</feature>
<feature type="repeat" description="4">
    <location>
        <begin position="115"/>
        <end position="136"/>
    </location>
</feature>
<feature type="repeat" description="5">
    <location>
        <begin position="137"/>
        <end position="158"/>
    </location>
</feature>
<feature type="repeat" description="6">
    <location>
        <begin position="159"/>
        <end position="180"/>
    </location>
</feature>
<feature type="repeat" description="7">
    <location>
        <begin position="181"/>
        <end position="202"/>
    </location>
</feature>
<feature type="repeat" description="8">
    <location>
        <begin position="203"/>
        <end position="224"/>
    </location>
</feature>
<feature type="repeat" description="9">
    <location>
        <begin position="225"/>
        <end position="246"/>
    </location>
</feature>
<feature type="repeat" description="10">
    <location>
        <begin position="247"/>
        <end position="268"/>
    </location>
</feature>
<feature type="repeat" description="11">
    <location>
        <begin position="269"/>
        <end position="286"/>
    </location>
</feature>
<feature type="repeat" description="12">
    <location>
        <begin position="287"/>
        <end position="308"/>
    </location>
</feature>
<feature type="repeat" description="13">
    <location>
        <begin position="309"/>
        <end position="330"/>
    </location>
</feature>
<feature type="region of interest" description="13 X 22 AA approximate tandem repeats">
    <location>
        <begin position="33"/>
        <end position="330"/>
    </location>
</feature>
<keyword id="KW-0162">Chylomicron</keyword>
<keyword id="KW-0345">HDL</keyword>
<keyword id="KW-0445">Lipid transport</keyword>
<keyword id="KW-0597">Phosphoprotein</keyword>
<keyword id="KW-0677">Repeat</keyword>
<keyword id="KW-0964">Secreted</keyword>
<keyword id="KW-0732">Signal</keyword>
<keyword id="KW-0813">Transport</keyword>
<proteinExistence type="inferred from homology"/>
<protein>
    <recommendedName>
        <fullName>Apolipoprotein A-IV</fullName>
        <shortName>Apo-AIV</shortName>
        <shortName>ApoA-IV</shortName>
    </recommendedName>
    <alternativeName>
        <fullName>Apolipoprotein A4</fullName>
    </alternativeName>
</protein>
<gene>
    <name type="primary">APOA4</name>
</gene>